<protein>
    <recommendedName>
        <fullName>DNA polymerase epsilon subunit 3</fullName>
    </recommendedName>
    <alternativeName>
        <fullName>Arsenic-transactivated protein</fullName>
        <shortName>AsTP</shortName>
    </alternativeName>
    <alternativeName>
        <fullName>Chromatin accessibility complex 17 kDa protein</fullName>
        <shortName>CHRAC-17</shortName>
        <shortName>HuCHRAC17</shortName>
    </alternativeName>
    <alternativeName>
        <fullName>DNA polymerase II subunit 3</fullName>
    </alternativeName>
    <alternativeName>
        <fullName>DNA polymerase epsilon subunit p17</fullName>
    </alternativeName>
</protein>
<gene>
    <name type="primary">POLE3</name>
    <name type="synonym">CHRAC17</name>
</gene>
<evidence type="ECO:0000250" key="1">
    <source>
        <dbReference type="UniProtKB" id="Q04603"/>
    </source>
</evidence>
<evidence type="ECO:0000255" key="2"/>
<evidence type="ECO:0000256" key="3">
    <source>
        <dbReference type="SAM" id="MobiDB-lite"/>
    </source>
</evidence>
<evidence type="ECO:0000269" key="4">
    <source>
    </source>
</evidence>
<evidence type="ECO:0000269" key="5">
    <source>
    </source>
</evidence>
<evidence type="ECO:0000269" key="6">
    <source>
    </source>
</evidence>
<evidence type="ECO:0000269" key="7">
    <source>
    </source>
</evidence>
<evidence type="ECO:0000269" key="8">
    <source ref="5"/>
</evidence>
<evidence type="ECO:0000269" key="9">
    <source ref="8"/>
</evidence>
<evidence type="ECO:0000305" key="10"/>
<evidence type="ECO:0007744" key="11">
    <source>
    </source>
</evidence>
<evidence type="ECO:0007744" key="12">
    <source>
    </source>
</evidence>
<evidence type="ECO:0007744" key="13">
    <source>
    </source>
</evidence>
<evidence type="ECO:0007744" key="14">
    <source>
    </source>
</evidence>
<keyword id="KW-0007">Acetylation</keyword>
<keyword id="KW-0175">Coiled coil</keyword>
<keyword id="KW-0903">Direct protein sequencing</keyword>
<keyword id="KW-0238">DNA-binding</keyword>
<keyword id="KW-0539">Nucleus</keyword>
<keyword id="KW-0597">Phosphoprotein</keyword>
<keyword id="KW-1267">Proteomics identification</keyword>
<keyword id="KW-1185">Reference proteome</keyword>
<dbReference type="EMBL" id="AF226077">
    <property type="protein sequence ID" value="AAF72417.1"/>
    <property type="molecule type" value="mRNA"/>
</dbReference>
<dbReference type="EMBL" id="AF261689">
    <property type="protein sequence ID" value="AAF90133.1"/>
    <property type="molecule type" value="Genomic_DNA"/>
</dbReference>
<dbReference type="EMBL" id="AY720898">
    <property type="protein sequence ID" value="AAU15052.1"/>
    <property type="molecule type" value="mRNA"/>
</dbReference>
<dbReference type="EMBL" id="AK074629">
    <property type="protein sequence ID" value="BAC11099.1"/>
    <property type="molecule type" value="mRNA"/>
</dbReference>
<dbReference type="EMBL" id="AK074762">
    <property type="protein sequence ID" value="BAC11190.1"/>
    <property type="molecule type" value="mRNA"/>
</dbReference>
<dbReference type="EMBL" id="AK074782">
    <property type="protein sequence ID" value="BAC11206.1"/>
    <property type="molecule type" value="mRNA"/>
</dbReference>
<dbReference type="EMBL" id="DQ072116">
    <property type="protein sequence ID" value="AAY57326.1"/>
    <property type="molecule type" value="Genomic_DNA"/>
</dbReference>
<dbReference type="EMBL" id="AL137066">
    <property type="status" value="NOT_ANNOTATED_CDS"/>
    <property type="molecule type" value="Genomic_DNA"/>
</dbReference>
<dbReference type="EMBL" id="BC003166">
    <property type="protein sequence ID" value="AAH03166.1"/>
    <property type="molecule type" value="mRNA"/>
</dbReference>
<dbReference type="EMBL" id="BC004170">
    <property type="protein sequence ID" value="AAH04170.1"/>
    <property type="molecule type" value="mRNA"/>
</dbReference>
<dbReference type="CCDS" id="CCDS6795.1"/>
<dbReference type="RefSeq" id="NP_001265184.1">
    <property type="nucleotide sequence ID" value="NM_001278255.1"/>
</dbReference>
<dbReference type="RefSeq" id="NP_001420648.1">
    <property type="nucleotide sequence ID" value="NM_001433719.1"/>
</dbReference>
<dbReference type="RefSeq" id="NP_059139.3">
    <property type="nucleotide sequence ID" value="NM_017443.4"/>
</dbReference>
<dbReference type="SMR" id="Q9NRF9"/>
<dbReference type="BioGRID" id="119903">
    <property type="interactions" value="109"/>
</dbReference>
<dbReference type="ComplexPortal" id="CPX-2108">
    <property type="entry name" value="DNA polymerase epsilon complex"/>
</dbReference>
<dbReference type="ComplexPortal" id="CPX-785">
    <property type="entry name" value="CHRAC chromatin remodeling complex"/>
</dbReference>
<dbReference type="CORUM" id="Q9NRF9"/>
<dbReference type="FunCoup" id="Q9NRF9">
    <property type="interactions" value="1830"/>
</dbReference>
<dbReference type="IntAct" id="Q9NRF9">
    <property type="interactions" value="35"/>
</dbReference>
<dbReference type="MINT" id="Q9NRF9"/>
<dbReference type="STRING" id="9606.ENSP00000363286"/>
<dbReference type="ChEMBL" id="CHEMBL3833525"/>
<dbReference type="DrugBank" id="DB00242">
    <property type="generic name" value="Cladribine"/>
</dbReference>
<dbReference type="GlyGen" id="Q9NRF9">
    <property type="glycosylation" value="2 sites, 1 N-linked glycan (1 site), 1 O-linked glycan (1 site)"/>
</dbReference>
<dbReference type="iPTMnet" id="Q9NRF9"/>
<dbReference type="PhosphoSitePlus" id="Q9NRF9"/>
<dbReference type="SwissPalm" id="Q9NRF9"/>
<dbReference type="BioMuta" id="POLE3"/>
<dbReference type="DMDM" id="22653710"/>
<dbReference type="jPOST" id="Q9NRF9"/>
<dbReference type="MassIVE" id="Q9NRF9"/>
<dbReference type="PaxDb" id="9606-ENSP00000363286"/>
<dbReference type="PeptideAtlas" id="Q9NRF9"/>
<dbReference type="ProteomicsDB" id="82350"/>
<dbReference type="Pumba" id="Q9NRF9"/>
<dbReference type="TopDownProteomics" id="Q9NRF9"/>
<dbReference type="Antibodypedia" id="15326">
    <property type="antibodies" value="228 antibodies from 30 providers"/>
</dbReference>
<dbReference type="DNASU" id="54107"/>
<dbReference type="Ensembl" id="ENST00000374169.7">
    <property type="protein sequence ID" value="ENSP00000363284.3"/>
    <property type="gene ID" value="ENSG00000148229.13"/>
</dbReference>
<dbReference type="Ensembl" id="ENST00000374171.5">
    <property type="protein sequence ID" value="ENSP00000363286.4"/>
    <property type="gene ID" value="ENSG00000148229.13"/>
</dbReference>
<dbReference type="GeneID" id="54107"/>
<dbReference type="KEGG" id="hsa:54107"/>
<dbReference type="MANE-Select" id="ENST00000374171.5">
    <property type="protein sequence ID" value="ENSP00000363286.4"/>
    <property type="RefSeq nucleotide sequence ID" value="NM_017443.5"/>
    <property type="RefSeq protein sequence ID" value="NP_059139.3"/>
</dbReference>
<dbReference type="UCSC" id="uc004bhn.4">
    <property type="organism name" value="human"/>
</dbReference>
<dbReference type="AGR" id="HGNC:13546"/>
<dbReference type="CTD" id="54107"/>
<dbReference type="DisGeNET" id="54107"/>
<dbReference type="GeneCards" id="POLE3"/>
<dbReference type="HGNC" id="HGNC:13546">
    <property type="gene designation" value="POLE3"/>
</dbReference>
<dbReference type="HPA" id="ENSG00000148229">
    <property type="expression patterns" value="Low tissue specificity"/>
</dbReference>
<dbReference type="MIM" id="607267">
    <property type="type" value="gene"/>
</dbReference>
<dbReference type="neXtProt" id="NX_Q9NRF9"/>
<dbReference type="OpenTargets" id="ENSG00000148229"/>
<dbReference type="PharmGKB" id="PA33499"/>
<dbReference type="VEuPathDB" id="HostDB:ENSG00000148229"/>
<dbReference type="eggNOG" id="KOG0870">
    <property type="taxonomic scope" value="Eukaryota"/>
</dbReference>
<dbReference type="GeneTree" id="ENSGT00940000161417"/>
<dbReference type="HOGENOM" id="CLU_066247_7_2_1"/>
<dbReference type="InParanoid" id="Q9NRF9"/>
<dbReference type="OMA" id="KQNHRTI"/>
<dbReference type="OrthoDB" id="1707486at2759"/>
<dbReference type="PAN-GO" id="Q9NRF9">
    <property type="GO annotations" value="6 GO annotations based on evolutionary models"/>
</dbReference>
<dbReference type="PhylomeDB" id="Q9NRF9"/>
<dbReference type="TreeFam" id="TF103008"/>
<dbReference type="BRENDA" id="2.7.7.7">
    <property type="organism ID" value="2681"/>
</dbReference>
<dbReference type="PathwayCommons" id="Q9NRF9"/>
<dbReference type="Reactome" id="R-HSA-110314">
    <property type="pathway name" value="Recognition of DNA damage by PCNA-containing replication complex"/>
</dbReference>
<dbReference type="Reactome" id="R-HSA-5651801">
    <property type="pathway name" value="PCNA-Dependent Long Patch Base Excision Repair"/>
</dbReference>
<dbReference type="Reactome" id="R-HSA-5656169">
    <property type="pathway name" value="Termination of translesion DNA synthesis"/>
</dbReference>
<dbReference type="Reactome" id="R-HSA-5685942">
    <property type="pathway name" value="HDR through Homologous Recombination (HRR)"/>
</dbReference>
<dbReference type="Reactome" id="R-HSA-5696397">
    <property type="pathway name" value="Gap-filling DNA repair synthesis and ligation in GG-NER"/>
</dbReference>
<dbReference type="Reactome" id="R-HSA-5696400">
    <property type="pathway name" value="Dual Incision in GG-NER"/>
</dbReference>
<dbReference type="Reactome" id="R-HSA-6782135">
    <property type="pathway name" value="Dual incision in TC-NER"/>
</dbReference>
<dbReference type="Reactome" id="R-HSA-6782210">
    <property type="pathway name" value="Gap-filling DNA repair synthesis and ligation in TC-NER"/>
</dbReference>
<dbReference type="Reactome" id="R-HSA-68952">
    <property type="pathway name" value="DNA replication initiation"/>
</dbReference>
<dbReference type="Reactome" id="R-HSA-68962">
    <property type="pathway name" value="Activation of the pre-replicative complex"/>
</dbReference>
<dbReference type="SignaLink" id="Q9NRF9"/>
<dbReference type="SIGNOR" id="Q9NRF9"/>
<dbReference type="BioGRID-ORCS" id="54107">
    <property type="hits" value="201 hits in 1172 CRISPR screens"/>
</dbReference>
<dbReference type="CD-CODE" id="91857CE7">
    <property type="entry name" value="Nucleolus"/>
</dbReference>
<dbReference type="ChiTaRS" id="POLE3">
    <property type="organism name" value="human"/>
</dbReference>
<dbReference type="GeneWiki" id="POLE3"/>
<dbReference type="GenomeRNAi" id="54107"/>
<dbReference type="Pharos" id="Q9NRF9">
    <property type="development level" value="Tbio"/>
</dbReference>
<dbReference type="PRO" id="PR:Q9NRF9"/>
<dbReference type="Proteomes" id="UP000005640">
    <property type="component" value="Chromosome 9"/>
</dbReference>
<dbReference type="RNAct" id="Q9NRF9">
    <property type="molecule type" value="protein"/>
</dbReference>
<dbReference type="Bgee" id="ENSG00000148229">
    <property type="expression patterns" value="Expressed in primordial germ cell in gonad and 202 other cell types or tissues"/>
</dbReference>
<dbReference type="ExpressionAtlas" id="Q9NRF9">
    <property type="expression patterns" value="baseline and differential"/>
</dbReference>
<dbReference type="GO" id="GO:0140672">
    <property type="term" value="C:ATAC complex"/>
    <property type="evidence" value="ECO:0000314"/>
    <property type="project" value="BHF-UCL"/>
</dbReference>
<dbReference type="GO" id="GO:0008623">
    <property type="term" value="C:CHRAC"/>
    <property type="evidence" value="ECO:0000318"/>
    <property type="project" value="GO_Central"/>
</dbReference>
<dbReference type="GO" id="GO:0008622">
    <property type="term" value="C:epsilon DNA polymerase complex"/>
    <property type="evidence" value="ECO:0000314"/>
    <property type="project" value="UniProtKB"/>
</dbReference>
<dbReference type="GO" id="GO:0005654">
    <property type="term" value="C:nucleoplasm"/>
    <property type="evidence" value="ECO:0000304"/>
    <property type="project" value="Reactome"/>
</dbReference>
<dbReference type="GO" id="GO:0005634">
    <property type="term" value="C:nucleus"/>
    <property type="evidence" value="ECO:0000304"/>
    <property type="project" value="ProtInc"/>
</dbReference>
<dbReference type="GO" id="GO:0005721">
    <property type="term" value="C:pericentric heterochromatin"/>
    <property type="evidence" value="ECO:0000266"/>
    <property type="project" value="ComplexPortal"/>
</dbReference>
<dbReference type="GO" id="GO:0031490">
    <property type="term" value="F:chromatin DNA binding"/>
    <property type="evidence" value="ECO:0000318"/>
    <property type="project" value="GO_Central"/>
</dbReference>
<dbReference type="GO" id="GO:0003887">
    <property type="term" value="F:DNA-directed DNA polymerase activity"/>
    <property type="evidence" value="ECO:0000304"/>
    <property type="project" value="ProtInc"/>
</dbReference>
<dbReference type="GO" id="GO:0046982">
    <property type="term" value="F:protein heterodimerization activity"/>
    <property type="evidence" value="ECO:0007669"/>
    <property type="project" value="InterPro"/>
</dbReference>
<dbReference type="GO" id="GO:0006338">
    <property type="term" value="P:chromatin remodeling"/>
    <property type="evidence" value="ECO:0000314"/>
    <property type="project" value="ComplexPortal"/>
</dbReference>
<dbReference type="GO" id="GO:0006974">
    <property type="term" value="P:DNA damage response"/>
    <property type="evidence" value="ECO:0000318"/>
    <property type="project" value="GO_Central"/>
</dbReference>
<dbReference type="GO" id="GO:0006260">
    <property type="term" value="P:DNA replication"/>
    <property type="evidence" value="ECO:0000304"/>
    <property type="project" value="ProtInc"/>
</dbReference>
<dbReference type="GO" id="GO:0006261">
    <property type="term" value="P:DNA-templated DNA replication"/>
    <property type="evidence" value="ECO:0000314"/>
    <property type="project" value="ComplexPortal"/>
</dbReference>
<dbReference type="GO" id="GO:0031507">
    <property type="term" value="P:heterochromatin formation"/>
    <property type="evidence" value="ECO:0000318"/>
    <property type="project" value="GO_Central"/>
</dbReference>
<dbReference type="GO" id="GO:0006272">
    <property type="term" value="P:leading strand elongation"/>
    <property type="evidence" value="ECO:0000318"/>
    <property type="project" value="GO_Central"/>
</dbReference>
<dbReference type="GO" id="GO:0000122">
    <property type="term" value="P:negative regulation of transcription by RNA polymerase II"/>
    <property type="evidence" value="ECO:0000314"/>
    <property type="project" value="BHF-UCL"/>
</dbReference>
<dbReference type="GO" id="GO:0006334">
    <property type="term" value="P:nucleosome assembly"/>
    <property type="evidence" value="ECO:0000314"/>
    <property type="project" value="ComplexPortal"/>
</dbReference>
<dbReference type="GO" id="GO:0006275">
    <property type="term" value="P:regulation of DNA replication"/>
    <property type="evidence" value="ECO:0000315"/>
    <property type="project" value="ComplexPortal"/>
</dbReference>
<dbReference type="CDD" id="cd22928">
    <property type="entry name" value="HFD_POLE3_DPB4"/>
    <property type="match status" value="1"/>
</dbReference>
<dbReference type="FunFam" id="1.10.20.10:FF:000041">
    <property type="entry name" value="DNA polymerase epsilon subunit 3"/>
    <property type="match status" value="1"/>
</dbReference>
<dbReference type="Gene3D" id="1.10.20.10">
    <property type="entry name" value="Histone, subunit A"/>
    <property type="match status" value="1"/>
</dbReference>
<dbReference type="InterPro" id="IPR003958">
    <property type="entry name" value="CBFA_NFYB_domain"/>
</dbReference>
<dbReference type="InterPro" id="IPR051377">
    <property type="entry name" value="DNA_Pol-Epsilon_Subunit"/>
</dbReference>
<dbReference type="InterPro" id="IPR009072">
    <property type="entry name" value="Histone-fold"/>
</dbReference>
<dbReference type="PANTHER" id="PTHR46172">
    <property type="entry name" value="DNA POLYMERASE EPSILON SUBUNIT 3"/>
    <property type="match status" value="1"/>
</dbReference>
<dbReference type="PANTHER" id="PTHR46172:SF1">
    <property type="entry name" value="DNA POLYMERASE EPSILON SUBUNIT 3"/>
    <property type="match status" value="1"/>
</dbReference>
<dbReference type="Pfam" id="PF00808">
    <property type="entry name" value="CBFD_NFYB_HMF"/>
    <property type="match status" value="1"/>
</dbReference>
<dbReference type="SUPFAM" id="SSF47113">
    <property type="entry name" value="Histone-fold"/>
    <property type="match status" value="1"/>
</dbReference>
<feature type="initiator methionine" description="Removed" evidence="9 12">
    <location>
        <position position="1"/>
    </location>
</feature>
<feature type="chain" id="PRO_0000208341" description="DNA polymerase epsilon subunit 3">
    <location>
        <begin position="2"/>
        <end position="147"/>
    </location>
</feature>
<feature type="region of interest" description="Disordered" evidence="3">
    <location>
        <begin position="93"/>
        <end position="147"/>
    </location>
</feature>
<feature type="coiled-coil region" evidence="2">
    <location>
        <begin position="85"/>
        <end position="146"/>
    </location>
</feature>
<feature type="compositionally biased region" description="Basic and acidic residues" evidence="3">
    <location>
        <begin position="93"/>
        <end position="124"/>
    </location>
</feature>
<feature type="compositionally biased region" description="Acidic residues" evidence="3">
    <location>
        <begin position="125"/>
        <end position="147"/>
    </location>
</feature>
<feature type="modified residue" description="N-acetylalanine" evidence="9 12">
    <location>
        <position position="2"/>
    </location>
</feature>
<feature type="modified residue" description="Phosphothreonine" evidence="11">
    <location>
        <position position="83"/>
    </location>
</feature>
<feature type="modified residue" description="Phosphoserine" evidence="11 13 14">
    <location>
        <position position="122"/>
    </location>
</feature>
<feature type="sequence variant" id="VAR_023464" description="In dbSNP:rs36023979." evidence="8">
    <original>T</original>
    <variation>A</variation>
    <location>
        <position position="83"/>
    </location>
</feature>
<feature type="sequence variant" id="VAR_057527" description="In dbSNP:rs34852828.">
    <original>D</original>
    <variation>A</variation>
    <location>
        <position position="126"/>
    </location>
</feature>
<feature type="sequence variant" id="VAR_023465" description="In dbSNP:rs35933626." evidence="8">
    <original>E</original>
    <variation>D</variation>
    <location>
        <position position="135"/>
    </location>
</feature>
<feature type="sequence conflict" description="In Ref. 3; AAU15052 and 4; BAC11206." evidence="10" ref="3 4">
    <original>K</original>
    <variation>N</variation>
    <location>
        <position position="58"/>
    </location>
</feature>
<feature type="sequence conflict" description="In Ref. 4; BAC11190." evidence="10" ref="4">
    <original>T</original>
    <variation>I</variation>
    <location>
        <position position="83"/>
    </location>
</feature>
<feature type="sequence conflict" description="In Ref. 2; AAF90133." evidence="10" ref="2">
    <original>D</original>
    <variation>Y</variation>
    <location>
        <position position="146"/>
    </location>
</feature>
<reference key="1">
    <citation type="journal article" date="2000" name="EMBO J.">
        <title>HuCHRAC, a human ISWI chromatin remodelling complex contains hACF1 and two novel histone-fold proteins.</title>
        <authorList>
            <person name="Poot R.A."/>
            <person name="Dellaire G."/>
            <person name="Huelsmann B.B."/>
            <person name="Grimaldi M.A."/>
            <person name="Corona D.F.V."/>
            <person name="Becker P.B."/>
            <person name="Bickmore W.A."/>
            <person name="Varga-Weisz P.D."/>
        </authorList>
    </citation>
    <scope>NUCLEOTIDE SEQUENCE [MRNA]</scope>
    <scope>IDENTIFICATION IN THE CHRAC ISWI CHROMATIN REMODELING COMPLEX</scope>
    <scope>INTERACTION WITH SMARCA5; BAZ1A AND CHRAC1</scope>
    <scope>TISSUE SPECIFICITY</scope>
</reference>
<reference key="2">
    <citation type="journal article" date="2000" name="J. Biol. Chem.">
        <title>Identification and cloning of two histone fold motif-containing subunits of HeLa DNA polymerase epsilon.</title>
        <authorList>
            <person name="Li Y."/>
            <person name="Pursell Z.F."/>
            <person name="Linn S."/>
        </authorList>
    </citation>
    <scope>NUCLEOTIDE SEQUENCE [GENOMIC DNA]</scope>
    <scope>PROTEIN SEQUENCE OF 63-77 AND 81-86</scope>
    <scope>FUNCTION</scope>
    <scope>IDENTIFICATION IN EPSILON DNA POLYMERASE COMPLEX</scope>
    <source>
        <tissue>Cervix carcinoma</tissue>
    </source>
</reference>
<reference key="3">
    <citation type="submission" date="2004-08" db="EMBL/GenBank/DDBJ databases">
        <title>Screening and cloning of target genes differential expressed in HepG2 cells treated with arsenic trioxide by suppression subtractive hybridization technique.</title>
        <authorList>
            <person name="Wu S.-H."/>
            <person name="Cheng J."/>
            <person name="Liu Y."/>
            <person name="Zheng Y.-J."/>
            <person name="Zhang Y.-X."/>
            <person name="Xie Q."/>
            <person name="Guo J."/>
        </authorList>
    </citation>
    <scope>NUCLEOTIDE SEQUENCE [MRNA]</scope>
</reference>
<reference key="4">
    <citation type="journal article" date="2004" name="Nat. Genet.">
        <title>Complete sequencing and characterization of 21,243 full-length human cDNAs.</title>
        <authorList>
            <person name="Ota T."/>
            <person name="Suzuki Y."/>
            <person name="Nishikawa T."/>
            <person name="Otsuki T."/>
            <person name="Sugiyama T."/>
            <person name="Irie R."/>
            <person name="Wakamatsu A."/>
            <person name="Hayashi K."/>
            <person name="Sato H."/>
            <person name="Nagai K."/>
            <person name="Kimura K."/>
            <person name="Makita H."/>
            <person name="Sekine M."/>
            <person name="Obayashi M."/>
            <person name="Nishi T."/>
            <person name="Shibahara T."/>
            <person name="Tanaka T."/>
            <person name="Ishii S."/>
            <person name="Yamamoto J."/>
            <person name="Saito K."/>
            <person name="Kawai Y."/>
            <person name="Isono Y."/>
            <person name="Nakamura Y."/>
            <person name="Nagahari K."/>
            <person name="Murakami K."/>
            <person name="Yasuda T."/>
            <person name="Iwayanagi T."/>
            <person name="Wagatsuma M."/>
            <person name="Shiratori A."/>
            <person name="Sudo H."/>
            <person name="Hosoiri T."/>
            <person name="Kaku Y."/>
            <person name="Kodaira H."/>
            <person name="Kondo H."/>
            <person name="Sugawara M."/>
            <person name="Takahashi M."/>
            <person name="Kanda K."/>
            <person name="Yokoi T."/>
            <person name="Furuya T."/>
            <person name="Kikkawa E."/>
            <person name="Omura Y."/>
            <person name="Abe K."/>
            <person name="Kamihara K."/>
            <person name="Katsuta N."/>
            <person name="Sato K."/>
            <person name="Tanikawa M."/>
            <person name="Yamazaki M."/>
            <person name="Ninomiya K."/>
            <person name="Ishibashi T."/>
            <person name="Yamashita H."/>
            <person name="Murakawa K."/>
            <person name="Fujimori K."/>
            <person name="Tanai H."/>
            <person name="Kimata M."/>
            <person name="Watanabe M."/>
            <person name="Hiraoka S."/>
            <person name="Chiba Y."/>
            <person name="Ishida S."/>
            <person name="Ono Y."/>
            <person name="Takiguchi S."/>
            <person name="Watanabe S."/>
            <person name="Yosida M."/>
            <person name="Hotuta T."/>
            <person name="Kusano J."/>
            <person name="Kanehori K."/>
            <person name="Takahashi-Fujii A."/>
            <person name="Hara H."/>
            <person name="Tanase T.-O."/>
            <person name="Nomura Y."/>
            <person name="Togiya S."/>
            <person name="Komai F."/>
            <person name="Hara R."/>
            <person name="Takeuchi K."/>
            <person name="Arita M."/>
            <person name="Imose N."/>
            <person name="Musashino K."/>
            <person name="Yuuki H."/>
            <person name="Oshima A."/>
            <person name="Sasaki N."/>
            <person name="Aotsuka S."/>
            <person name="Yoshikawa Y."/>
            <person name="Matsunawa H."/>
            <person name="Ichihara T."/>
            <person name="Shiohata N."/>
            <person name="Sano S."/>
            <person name="Moriya S."/>
            <person name="Momiyama H."/>
            <person name="Satoh N."/>
            <person name="Takami S."/>
            <person name="Terashima Y."/>
            <person name="Suzuki O."/>
            <person name="Nakagawa S."/>
            <person name="Senoh A."/>
            <person name="Mizoguchi H."/>
            <person name="Goto Y."/>
            <person name="Shimizu F."/>
            <person name="Wakebe H."/>
            <person name="Hishigaki H."/>
            <person name="Watanabe T."/>
            <person name="Sugiyama A."/>
            <person name="Takemoto M."/>
            <person name="Kawakami B."/>
            <person name="Yamazaki M."/>
            <person name="Watanabe K."/>
            <person name="Kumagai A."/>
            <person name="Itakura S."/>
            <person name="Fukuzumi Y."/>
            <person name="Fujimori Y."/>
            <person name="Komiyama M."/>
            <person name="Tashiro H."/>
            <person name="Tanigami A."/>
            <person name="Fujiwara T."/>
            <person name="Ono T."/>
            <person name="Yamada K."/>
            <person name="Fujii Y."/>
            <person name="Ozaki K."/>
            <person name="Hirao M."/>
            <person name="Ohmori Y."/>
            <person name="Kawabata A."/>
            <person name="Hikiji T."/>
            <person name="Kobatake N."/>
            <person name="Inagaki H."/>
            <person name="Ikema Y."/>
            <person name="Okamoto S."/>
            <person name="Okitani R."/>
            <person name="Kawakami T."/>
            <person name="Noguchi S."/>
            <person name="Itoh T."/>
            <person name="Shigeta K."/>
            <person name="Senba T."/>
            <person name="Matsumura K."/>
            <person name="Nakajima Y."/>
            <person name="Mizuno T."/>
            <person name="Morinaga M."/>
            <person name="Sasaki M."/>
            <person name="Togashi T."/>
            <person name="Oyama M."/>
            <person name="Hata H."/>
            <person name="Watanabe M."/>
            <person name="Komatsu T."/>
            <person name="Mizushima-Sugano J."/>
            <person name="Satoh T."/>
            <person name="Shirai Y."/>
            <person name="Takahashi Y."/>
            <person name="Nakagawa K."/>
            <person name="Okumura K."/>
            <person name="Nagase T."/>
            <person name="Nomura N."/>
            <person name="Kikuchi H."/>
            <person name="Masuho Y."/>
            <person name="Yamashita R."/>
            <person name="Nakai K."/>
            <person name="Yada T."/>
            <person name="Nakamura Y."/>
            <person name="Ohara O."/>
            <person name="Isogai T."/>
            <person name="Sugano S."/>
        </authorList>
    </citation>
    <scope>NUCLEOTIDE SEQUENCE [LARGE SCALE MRNA]</scope>
</reference>
<reference key="5">
    <citation type="submission" date="2005-05" db="EMBL/GenBank/DDBJ databases">
        <authorList>
            <consortium name="NIEHS SNPs program"/>
        </authorList>
    </citation>
    <scope>NUCLEOTIDE SEQUENCE [GENOMIC DNA]</scope>
    <scope>VARIANTS ALA-83 AND ASP-135</scope>
</reference>
<reference key="6">
    <citation type="journal article" date="2004" name="Nature">
        <title>DNA sequence and analysis of human chromosome 9.</title>
        <authorList>
            <person name="Humphray S.J."/>
            <person name="Oliver K."/>
            <person name="Hunt A.R."/>
            <person name="Plumb R.W."/>
            <person name="Loveland J.E."/>
            <person name="Howe K.L."/>
            <person name="Andrews T.D."/>
            <person name="Searle S."/>
            <person name="Hunt S.E."/>
            <person name="Scott C.E."/>
            <person name="Jones M.C."/>
            <person name="Ainscough R."/>
            <person name="Almeida J.P."/>
            <person name="Ambrose K.D."/>
            <person name="Ashwell R.I.S."/>
            <person name="Babbage A.K."/>
            <person name="Babbage S."/>
            <person name="Bagguley C.L."/>
            <person name="Bailey J."/>
            <person name="Banerjee R."/>
            <person name="Barker D.J."/>
            <person name="Barlow K.F."/>
            <person name="Bates K."/>
            <person name="Beasley H."/>
            <person name="Beasley O."/>
            <person name="Bird C.P."/>
            <person name="Bray-Allen S."/>
            <person name="Brown A.J."/>
            <person name="Brown J.Y."/>
            <person name="Burford D."/>
            <person name="Burrill W."/>
            <person name="Burton J."/>
            <person name="Carder C."/>
            <person name="Carter N.P."/>
            <person name="Chapman J.C."/>
            <person name="Chen Y."/>
            <person name="Clarke G."/>
            <person name="Clark S.Y."/>
            <person name="Clee C.M."/>
            <person name="Clegg S."/>
            <person name="Collier R.E."/>
            <person name="Corby N."/>
            <person name="Crosier M."/>
            <person name="Cummings A.T."/>
            <person name="Davies J."/>
            <person name="Dhami P."/>
            <person name="Dunn M."/>
            <person name="Dutta I."/>
            <person name="Dyer L.W."/>
            <person name="Earthrowl M.E."/>
            <person name="Faulkner L."/>
            <person name="Fleming C.J."/>
            <person name="Frankish A."/>
            <person name="Frankland J.A."/>
            <person name="French L."/>
            <person name="Fricker D.G."/>
            <person name="Garner P."/>
            <person name="Garnett J."/>
            <person name="Ghori J."/>
            <person name="Gilbert J.G.R."/>
            <person name="Glison C."/>
            <person name="Grafham D.V."/>
            <person name="Gribble S."/>
            <person name="Griffiths C."/>
            <person name="Griffiths-Jones S."/>
            <person name="Grocock R."/>
            <person name="Guy J."/>
            <person name="Hall R.E."/>
            <person name="Hammond S."/>
            <person name="Harley J.L."/>
            <person name="Harrison E.S.I."/>
            <person name="Hart E.A."/>
            <person name="Heath P.D."/>
            <person name="Henderson C.D."/>
            <person name="Hopkins B.L."/>
            <person name="Howard P.J."/>
            <person name="Howden P.J."/>
            <person name="Huckle E."/>
            <person name="Johnson C."/>
            <person name="Johnson D."/>
            <person name="Joy A.A."/>
            <person name="Kay M."/>
            <person name="Keenan S."/>
            <person name="Kershaw J.K."/>
            <person name="Kimberley A.M."/>
            <person name="King A."/>
            <person name="Knights A."/>
            <person name="Laird G.K."/>
            <person name="Langford C."/>
            <person name="Lawlor S."/>
            <person name="Leongamornlert D.A."/>
            <person name="Leversha M."/>
            <person name="Lloyd C."/>
            <person name="Lloyd D.M."/>
            <person name="Lovell J."/>
            <person name="Martin S."/>
            <person name="Mashreghi-Mohammadi M."/>
            <person name="Matthews L."/>
            <person name="McLaren S."/>
            <person name="McLay K.E."/>
            <person name="McMurray A."/>
            <person name="Milne S."/>
            <person name="Nickerson T."/>
            <person name="Nisbett J."/>
            <person name="Nordsiek G."/>
            <person name="Pearce A.V."/>
            <person name="Peck A.I."/>
            <person name="Porter K.M."/>
            <person name="Pandian R."/>
            <person name="Pelan S."/>
            <person name="Phillimore B."/>
            <person name="Povey S."/>
            <person name="Ramsey Y."/>
            <person name="Rand V."/>
            <person name="Scharfe M."/>
            <person name="Sehra H.K."/>
            <person name="Shownkeen R."/>
            <person name="Sims S.K."/>
            <person name="Skuce C.D."/>
            <person name="Smith M."/>
            <person name="Steward C.A."/>
            <person name="Swarbreck D."/>
            <person name="Sycamore N."/>
            <person name="Tester J."/>
            <person name="Thorpe A."/>
            <person name="Tracey A."/>
            <person name="Tromans A."/>
            <person name="Thomas D.W."/>
            <person name="Wall M."/>
            <person name="Wallis J.M."/>
            <person name="West A.P."/>
            <person name="Whitehead S.L."/>
            <person name="Willey D.L."/>
            <person name="Williams S.A."/>
            <person name="Wilming L."/>
            <person name="Wray P.W."/>
            <person name="Young L."/>
            <person name="Ashurst J.L."/>
            <person name="Coulson A."/>
            <person name="Blocker H."/>
            <person name="Durbin R.M."/>
            <person name="Sulston J.E."/>
            <person name="Hubbard T."/>
            <person name="Jackson M.J."/>
            <person name="Bentley D.R."/>
            <person name="Beck S."/>
            <person name="Rogers J."/>
            <person name="Dunham I."/>
        </authorList>
    </citation>
    <scope>NUCLEOTIDE SEQUENCE [LARGE SCALE GENOMIC DNA]</scope>
</reference>
<reference key="7">
    <citation type="journal article" date="2004" name="Genome Res.">
        <title>The status, quality, and expansion of the NIH full-length cDNA project: the Mammalian Gene Collection (MGC).</title>
        <authorList>
            <consortium name="The MGC Project Team"/>
        </authorList>
    </citation>
    <scope>NUCLEOTIDE SEQUENCE [LARGE SCALE MRNA]</scope>
    <source>
        <tissue>Lung</tissue>
    </source>
</reference>
<reference key="8">
    <citation type="submission" date="2009-03" db="UniProtKB">
        <authorList>
            <person name="Bienvenut W.V."/>
            <person name="Waridel P."/>
            <person name="Quadroni M."/>
        </authorList>
    </citation>
    <scope>PROTEIN SEQUENCE OF 2-17 AND 40-58</scope>
    <scope>CLEAVAGE OF INITIATOR METHIONINE</scope>
    <scope>ACETYLATION AT ALA-2</scope>
    <scope>IDENTIFICATION BY MASS SPECTROMETRY</scope>
    <source>
        <tissue>Embryonic kidney</tissue>
    </source>
</reference>
<reference key="9">
    <citation type="journal article" date="2002" name="Nat. Genet.">
        <title>An ACF1-ISWI chromatin-remodeling complex is required for DNA replication through heterochromatin.</title>
        <authorList>
            <person name="Collins N."/>
            <person name="Poot R.A."/>
            <person name="Kukimoto I."/>
            <person name="Garcia-Jimenez C."/>
            <person name="Dellaire G."/>
            <person name="Varga-Weisz P.D."/>
        </authorList>
    </citation>
    <scope>INTERACTION WITH BAZ1A</scope>
</reference>
<reference key="10">
    <citation type="journal article" date="2004" name="Mol. Cell">
        <title>The histone-fold protein complex CHRAC-15/17 enhances nucleosome sliding and assembly mediated by ACF.</title>
        <authorList>
            <person name="Kukimoto I."/>
            <person name="Elderkin S."/>
            <person name="Grimaldi M."/>
            <person name="Oelgeschlager T."/>
            <person name="Varga-Weisz P.D."/>
        </authorList>
    </citation>
    <scope>FUNCTION</scope>
    <scope>INTERACTION WITH SMARCA5 AND BAZ1A</scope>
</reference>
<reference key="11">
    <citation type="journal article" date="2008" name="Proc. Natl. Acad. Sci. U.S.A.">
        <title>A quantitative atlas of mitotic phosphorylation.</title>
        <authorList>
            <person name="Dephoure N."/>
            <person name="Zhou C."/>
            <person name="Villen J."/>
            <person name="Beausoleil S.A."/>
            <person name="Bakalarski C.E."/>
            <person name="Elledge S.J."/>
            <person name="Gygi S.P."/>
        </authorList>
    </citation>
    <scope>PHOSPHORYLATION [LARGE SCALE ANALYSIS] AT THR-83 AND SER-122</scope>
    <scope>IDENTIFICATION BY MASS SPECTROMETRY [LARGE SCALE ANALYSIS]</scope>
    <source>
        <tissue>Cervix carcinoma</tissue>
    </source>
</reference>
<reference key="12">
    <citation type="journal article" date="2009" name="Anal. Chem.">
        <title>Lys-N and trypsin cover complementary parts of the phosphoproteome in a refined SCX-based approach.</title>
        <authorList>
            <person name="Gauci S."/>
            <person name="Helbig A.O."/>
            <person name="Slijper M."/>
            <person name="Krijgsveld J."/>
            <person name="Heck A.J."/>
            <person name="Mohammed S."/>
        </authorList>
    </citation>
    <scope>ACETYLATION [LARGE SCALE ANALYSIS] AT ALA-2</scope>
    <scope>CLEAVAGE OF INITIATOR METHIONINE [LARGE SCALE ANALYSIS]</scope>
    <scope>IDENTIFICATION BY MASS SPECTROMETRY [LARGE SCALE ANALYSIS]</scope>
</reference>
<reference key="13">
    <citation type="journal article" date="2010" name="Sci. Signal.">
        <title>Quantitative phosphoproteomics reveals widespread full phosphorylation site occupancy during mitosis.</title>
        <authorList>
            <person name="Olsen J.V."/>
            <person name="Vermeulen M."/>
            <person name="Santamaria A."/>
            <person name="Kumar C."/>
            <person name="Miller M.L."/>
            <person name="Jensen L.J."/>
            <person name="Gnad F."/>
            <person name="Cox J."/>
            <person name="Jensen T.S."/>
            <person name="Nigg E.A."/>
            <person name="Brunak S."/>
            <person name="Mann M."/>
        </authorList>
    </citation>
    <scope>PHOSPHORYLATION [LARGE SCALE ANALYSIS] AT SER-122</scope>
    <scope>IDENTIFICATION BY MASS SPECTROMETRY [LARGE SCALE ANALYSIS]</scope>
    <source>
        <tissue>Cervix carcinoma</tissue>
    </source>
</reference>
<reference key="14">
    <citation type="journal article" date="2011" name="BMC Syst. Biol.">
        <title>Initial characterization of the human central proteome.</title>
        <authorList>
            <person name="Burkard T.R."/>
            <person name="Planyavsky M."/>
            <person name="Kaupe I."/>
            <person name="Breitwieser F.P."/>
            <person name="Buerckstuemmer T."/>
            <person name="Bennett K.L."/>
            <person name="Superti-Furga G."/>
            <person name="Colinge J."/>
        </authorList>
    </citation>
    <scope>IDENTIFICATION BY MASS SPECTROMETRY [LARGE SCALE ANALYSIS]</scope>
</reference>
<reference key="15">
    <citation type="journal article" date="2011" name="Sci. Signal.">
        <title>System-wide temporal characterization of the proteome and phosphoproteome of human embryonic stem cell differentiation.</title>
        <authorList>
            <person name="Rigbolt K.T."/>
            <person name="Prokhorova T.A."/>
            <person name="Akimov V."/>
            <person name="Henningsen J."/>
            <person name="Johansen P.T."/>
            <person name="Kratchmarova I."/>
            <person name="Kassem M."/>
            <person name="Mann M."/>
            <person name="Olsen J.V."/>
            <person name="Blagoev B."/>
        </authorList>
    </citation>
    <scope>PHOSPHORYLATION [LARGE SCALE ANALYSIS] AT SER-122</scope>
    <scope>IDENTIFICATION BY MASS SPECTROMETRY [LARGE SCALE ANALYSIS]</scope>
</reference>
<proteinExistence type="evidence at protein level"/>
<sequence length="147" mass="16860">MAERPEDLNLPNAVITRIIKEALPDGVNISKEARSAISRAASVFVLYATSCANNFAMKGKRKTLNASDVLSAMEEMEFQRFVTPLKEALEAYRREQKGKKEASEQKKKDKDKKTDSEEQDKSRDEDNDEDEERLEEEEQNEEEEVDN</sequence>
<name>DPOE3_HUMAN</name>
<accession>Q9NRF9</accession>
<accession>Q5W0U1</accession>
<accession>Q8N758</accession>
<accession>Q8NCE5</accession>
<accession>Q9NR32</accession>
<organism>
    <name type="scientific">Homo sapiens</name>
    <name type="common">Human</name>
    <dbReference type="NCBI Taxonomy" id="9606"/>
    <lineage>
        <taxon>Eukaryota</taxon>
        <taxon>Metazoa</taxon>
        <taxon>Chordata</taxon>
        <taxon>Craniata</taxon>
        <taxon>Vertebrata</taxon>
        <taxon>Euteleostomi</taxon>
        <taxon>Mammalia</taxon>
        <taxon>Eutheria</taxon>
        <taxon>Euarchontoglires</taxon>
        <taxon>Primates</taxon>
        <taxon>Haplorrhini</taxon>
        <taxon>Catarrhini</taxon>
        <taxon>Hominidae</taxon>
        <taxon>Homo</taxon>
    </lineage>
</organism>
<comment type="function">
    <text evidence="1 4 7">Accessory component of the DNA polymerase epsilon complex (PubMed:10801849). Participates in DNA repair and in chromosomal DNA replication (By similarity). Forms a complex with CHRAC1 and binds naked DNA, which is then incorporated into chromatin, aided by the nucleosome-remodeling activity of ISWI/SNF2H and ACF1 (PubMed:10801849). Does not enhance nucleosome sliding activity of the ACF-5 ISWI chromatin remodeling complex (PubMed:14759371).</text>
</comment>
<comment type="subunit">
    <text evidence="4 5 6 7">Component of the DNA polymerase epsilon complex consisting of four subunits: the catalytic subunit POLE and the accessory subunits POLE2, POLE3 and POLE4. Interaction with POLE4 is a prerequisite for further binding with POLE and POLE2. Heterodimer with CHRAC1; binds to DNA (PubMed:10880450). Component of the CHRAC ISWI chromatin remodeling complex at least composed of SMARCA5/SNF2H, BAZ1A/ACF1, CHRAC1 and POLE3; the complex preferentially binds DNA through the CHRAC1-POLE3 heterodimer and possesses ATP-dependent nucleosome-remodeling activity (PubMed:10880450). Within the complex, the heterodimer with CHRAC1 interacts with SMARCA5/SNF2H; the interaction is direct and enhances nucleosome sliding activity by the SMARCA5/SNF2H and BAZ1A/ACF1 interaction (PubMed:10880450, PubMed:14759371). Within the complex, the heterodimer with CHRAC1 interacts with BAZ1A/ACF1; the interactions are direct (PubMed:10880450, PubMed:12434153, PubMed:14759371).</text>
</comment>
<comment type="interaction">
    <interactant intactId="EBI-744901">
        <id>Q9NRF9</id>
    </interactant>
    <interactant intactId="EBI-2795492">
        <id>Q9NRG0</id>
        <label>CHRAC1</label>
    </interactant>
    <organismsDiffer>false</organismsDiffer>
    <experiments>15</experiments>
</comment>
<comment type="interaction">
    <interactant intactId="EBI-744901">
        <id>Q9NRF9</id>
    </interactant>
    <interactant intactId="EBI-10240005">
        <id>Q658N3</id>
        <label>DKFZp666G145</label>
    </interactant>
    <organismsDiffer>false</organismsDiffer>
    <experiments>3</experiments>
</comment>
<comment type="interaction">
    <interactant intactId="EBI-744901">
        <id>Q9NRF9</id>
    </interactant>
    <interactant intactId="EBI-750300">
        <id>Q01658</id>
        <label>DR1</label>
    </interactant>
    <organismsDiffer>false</organismsDiffer>
    <experiments>7</experiments>
</comment>
<comment type="interaction">
    <interactant intactId="EBI-744901">
        <id>Q9NRF9</id>
    </interactant>
    <interactant intactId="EBI-712941">
        <id>Q14919</id>
        <label>DRAP1</label>
    </interactant>
    <organismsDiffer>false</organismsDiffer>
    <experiments>8</experiments>
</comment>
<comment type="interaction">
    <interactant intactId="EBI-744901">
        <id>Q9NRF9</id>
    </interactant>
    <interactant intactId="EBI-867034">
        <id>Q9NR33</id>
        <label>POLE4</label>
    </interactant>
    <organismsDiffer>false</organismsDiffer>
    <experiments>8</experiments>
</comment>
<comment type="interaction">
    <interactant intactId="EBI-744901">
        <id>Q9NRF9</id>
    </interactant>
    <interactant intactId="EBI-6248094">
        <id>Q9Q2G4</id>
        <label>ORF</label>
    </interactant>
    <organismsDiffer>true</organismsDiffer>
    <experiments>5</experiments>
</comment>
<comment type="subcellular location">
    <subcellularLocation>
        <location evidence="10">Nucleus</location>
    </subcellularLocation>
</comment>
<comment type="tissue specificity">
    <text evidence="5">Expressed in heart, brain, placenta, lung, liver, skeletal muscle, kidney and pancreas.</text>
</comment>